<accession>Q54DA7</accession>
<protein>
    <recommendedName>
        <fullName>Ras-related protein Rab-4</fullName>
    </recommendedName>
</protein>
<evidence type="ECO:0000250" key="1"/>
<evidence type="ECO:0000250" key="2">
    <source>
        <dbReference type="UniProtKB" id="P61018"/>
    </source>
</evidence>
<evidence type="ECO:0000250" key="3">
    <source>
        <dbReference type="UniProtKB" id="P62820"/>
    </source>
</evidence>
<evidence type="ECO:0000305" key="4"/>
<name>RAB4_DICDI</name>
<keyword id="KW-1003">Cell membrane</keyword>
<keyword id="KW-0342">GTP-binding</keyword>
<keyword id="KW-0449">Lipoprotein</keyword>
<keyword id="KW-0472">Membrane</keyword>
<keyword id="KW-0488">Methylation</keyword>
<keyword id="KW-0547">Nucleotide-binding</keyword>
<keyword id="KW-0636">Prenylation</keyword>
<keyword id="KW-0653">Protein transport</keyword>
<keyword id="KW-1185">Reference proteome</keyword>
<keyword id="KW-0813">Transport</keyword>
<reference key="1">
    <citation type="journal article" date="2005" name="Nature">
        <title>The genome of the social amoeba Dictyostelium discoideum.</title>
        <authorList>
            <person name="Eichinger L."/>
            <person name="Pachebat J.A."/>
            <person name="Gloeckner G."/>
            <person name="Rajandream M.A."/>
            <person name="Sucgang R."/>
            <person name="Berriman M."/>
            <person name="Song J."/>
            <person name="Olsen R."/>
            <person name="Szafranski K."/>
            <person name="Xu Q."/>
            <person name="Tunggal B."/>
            <person name="Kummerfeld S."/>
            <person name="Madera M."/>
            <person name="Konfortov B.A."/>
            <person name="Rivero F."/>
            <person name="Bankier A.T."/>
            <person name="Lehmann R."/>
            <person name="Hamlin N."/>
            <person name="Davies R."/>
            <person name="Gaudet P."/>
            <person name="Fey P."/>
            <person name="Pilcher K."/>
            <person name="Chen G."/>
            <person name="Saunders D."/>
            <person name="Sodergren E.J."/>
            <person name="Davis P."/>
            <person name="Kerhornou A."/>
            <person name="Nie X."/>
            <person name="Hall N."/>
            <person name="Anjard C."/>
            <person name="Hemphill L."/>
            <person name="Bason N."/>
            <person name="Farbrother P."/>
            <person name="Desany B."/>
            <person name="Just E."/>
            <person name="Morio T."/>
            <person name="Rost R."/>
            <person name="Churcher C.M."/>
            <person name="Cooper J."/>
            <person name="Haydock S."/>
            <person name="van Driessche N."/>
            <person name="Cronin A."/>
            <person name="Goodhead I."/>
            <person name="Muzny D.M."/>
            <person name="Mourier T."/>
            <person name="Pain A."/>
            <person name="Lu M."/>
            <person name="Harper D."/>
            <person name="Lindsay R."/>
            <person name="Hauser H."/>
            <person name="James K.D."/>
            <person name="Quiles M."/>
            <person name="Madan Babu M."/>
            <person name="Saito T."/>
            <person name="Buchrieser C."/>
            <person name="Wardroper A."/>
            <person name="Felder M."/>
            <person name="Thangavelu M."/>
            <person name="Johnson D."/>
            <person name="Knights A."/>
            <person name="Loulseged H."/>
            <person name="Mungall K.L."/>
            <person name="Oliver K."/>
            <person name="Price C."/>
            <person name="Quail M.A."/>
            <person name="Urushihara H."/>
            <person name="Hernandez J."/>
            <person name="Rabbinowitsch E."/>
            <person name="Steffen D."/>
            <person name="Sanders M."/>
            <person name="Ma J."/>
            <person name="Kohara Y."/>
            <person name="Sharp S."/>
            <person name="Simmonds M.N."/>
            <person name="Spiegler S."/>
            <person name="Tivey A."/>
            <person name="Sugano S."/>
            <person name="White B."/>
            <person name="Walker D."/>
            <person name="Woodward J.R."/>
            <person name="Winckler T."/>
            <person name="Tanaka Y."/>
            <person name="Shaulsky G."/>
            <person name="Schleicher M."/>
            <person name="Weinstock G.M."/>
            <person name="Rosenthal A."/>
            <person name="Cox E.C."/>
            <person name="Chisholm R.L."/>
            <person name="Gibbs R.A."/>
            <person name="Loomis W.F."/>
            <person name="Platzer M."/>
            <person name="Kay R.R."/>
            <person name="Williams J.G."/>
            <person name="Dear P.H."/>
            <person name="Noegel A.A."/>
            <person name="Barrell B.G."/>
            <person name="Kuspa A."/>
        </authorList>
    </citation>
    <scope>NUCLEOTIDE SEQUENCE [LARGE SCALE GENOMIC DNA]</scope>
    <source>
        <strain>AX4</strain>
    </source>
</reference>
<gene>
    <name type="primary">rab4</name>
    <name type="ORF">DDB_G0292406</name>
</gene>
<sequence length="205" mass="22629">MGKPLYLVKFIIIGSQSVGKSCLLFRFIDNKFKSQSTHTIGVDFSSRVVDIQGKNVKLQIWDTAGQERFRSVVISYYRGSAGVALVYDVTNRESYNHITNWLSDVKSLASPDVTIILVGNKADLTEQREVTFLEASRIAQENGLLFMETSALTGEGVEEMFLKCTRTIMTKIDSGEVNLEHLGVQISSDSGNVTKKPGDSSNCSC</sequence>
<feature type="chain" id="PRO_0000332750" description="Ras-related protein Rab-4">
    <location>
        <begin position="1"/>
        <end position="205"/>
    </location>
</feature>
<feature type="short sequence motif" description="Effector region" evidence="1">
    <location>
        <begin position="36"/>
        <end position="44"/>
    </location>
</feature>
<feature type="binding site" evidence="2">
    <location>
        <begin position="14"/>
        <end position="22"/>
    </location>
    <ligand>
        <name>GTP</name>
        <dbReference type="ChEBI" id="CHEBI:37565"/>
    </ligand>
</feature>
<feature type="binding site" evidence="3">
    <location>
        <begin position="62"/>
        <end position="66"/>
    </location>
    <ligand>
        <name>GTP</name>
        <dbReference type="ChEBI" id="CHEBI:37565"/>
    </ligand>
</feature>
<feature type="binding site" evidence="2">
    <location>
        <begin position="120"/>
        <end position="123"/>
    </location>
    <ligand>
        <name>GTP</name>
        <dbReference type="ChEBI" id="CHEBI:37565"/>
    </ligand>
</feature>
<feature type="binding site" evidence="2">
    <location>
        <begin position="150"/>
        <end position="152"/>
    </location>
    <ligand>
        <name>GTP</name>
        <dbReference type="ChEBI" id="CHEBI:37565"/>
    </ligand>
</feature>
<feature type="modified residue" description="Cysteine methyl ester" evidence="1">
    <location>
        <position position="205"/>
    </location>
</feature>
<feature type="lipid moiety-binding region" description="S-geranylgeranyl cysteine" evidence="1">
    <location>
        <position position="203"/>
    </location>
</feature>
<feature type="lipid moiety-binding region" description="S-geranylgeranyl cysteine" evidence="1">
    <location>
        <position position="205"/>
    </location>
</feature>
<dbReference type="EMBL" id="AAFI02000190">
    <property type="protein sequence ID" value="EAL61182.1"/>
    <property type="molecule type" value="Genomic_DNA"/>
</dbReference>
<dbReference type="RefSeq" id="XP_629589.1">
    <property type="nucleotide sequence ID" value="XM_629587.1"/>
</dbReference>
<dbReference type="SMR" id="Q54DA7"/>
<dbReference type="FunCoup" id="Q54DA7">
    <property type="interactions" value="7"/>
</dbReference>
<dbReference type="STRING" id="44689.Q54DA7"/>
<dbReference type="PaxDb" id="44689-DDB0229407"/>
<dbReference type="EnsemblProtists" id="EAL61182">
    <property type="protein sequence ID" value="EAL61182"/>
    <property type="gene ID" value="DDB_G0292406"/>
</dbReference>
<dbReference type="GeneID" id="8628649"/>
<dbReference type="KEGG" id="ddi:DDB_G0292406"/>
<dbReference type="dictyBase" id="DDB_G0292406">
    <property type="gene designation" value="rab4"/>
</dbReference>
<dbReference type="VEuPathDB" id="AmoebaDB:DDB_G0292406"/>
<dbReference type="eggNOG" id="KOG0086">
    <property type="taxonomic scope" value="Eukaryota"/>
</dbReference>
<dbReference type="HOGENOM" id="CLU_041217_23_1_1"/>
<dbReference type="InParanoid" id="Q54DA7"/>
<dbReference type="OMA" id="ASQNICI"/>
<dbReference type="PhylomeDB" id="Q54DA7"/>
<dbReference type="Reactome" id="R-DDI-6798695">
    <property type="pathway name" value="Neutrophil degranulation"/>
</dbReference>
<dbReference type="Reactome" id="R-DDI-8854214">
    <property type="pathway name" value="TBC/RABGAPs"/>
</dbReference>
<dbReference type="Reactome" id="R-DDI-8873719">
    <property type="pathway name" value="RAB geranylgeranylation"/>
</dbReference>
<dbReference type="PRO" id="PR:Q54DA7"/>
<dbReference type="Proteomes" id="UP000002195">
    <property type="component" value="Chromosome 6"/>
</dbReference>
<dbReference type="GO" id="GO:0140220">
    <property type="term" value="C:pathogen-containing vacuole"/>
    <property type="evidence" value="ECO:0007005"/>
    <property type="project" value="dictyBase"/>
</dbReference>
<dbReference type="GO" id="GO:0005886">
    <property type="term" value="C:plasma membrane"/>
    <property type="evidence" value="ECO:0007669"/>
    <property type="project" value="UniProtKB-SubCell"/>
</dbReference>
<dbReference type="GO" id="GO:0055037">
    <property type="term" value="C:recycling endosome"/>
    <property type="evidence" value="ECO:0000318"/>
    <property type="project" value="GO_Central"/>
</dbReference>
<dbReference type="GO" id="GO:0005525">
    <property type="term" value="F:GTP binding"/>
    <property type="evidence" value="ECO:0000318"/>
    <property type="project" value="GO_Central"/>
</dbReference>
<dbReference type="GO" id="GO:0003924">
    <property type="term" value="F:GTPase activity"/>
    <property type="evidence" value="ECO:0000318"/>
    <property type="project" value="GO_Central"/>
</dbReference>
<dbReference type="GO" id="GO:0015031">
    <property type="term" value="P:protein transport"/>
    <property type="evidence" value="ECO:0007669"/>
    <property type="project" value="UniProtKB-KW"/>
</dbReference>
<dbReference type="GO" id="GO:0032482">
    <property type="term" value="P:Rab protein signal transduction"/>
    <property type="evidence" value="ECO:0007669"/>
    <property type="project" value="InterPro"/>
</dbReference>
<dbReference type="GO" id="GO:0030100">
    <property type="term" value="P:regulation of endocytosis"/>
    <property type="evidence" value="ECO:0000318"/>
    <property type="project" value="GO_Central"/>
</dbReference>
<dbReference type="GO" id="GO:0016192">
    <property type="term" value="P:vesicle-mediated transport"/>
    <property type="evidence" value="ECO:0000318"/>
    <property type="project" value="GO_Central"/>
</dbReference>
<dbReference type="CDD" id="cd04113">
    <property type="entry name" value="Rab4"/>
    <property type="match status" value="1"/>
</dbReference>
<dbReference type="FunFam" id="3.40.50.300:FF:001193">
    <property type="entry name" value="Rab family, other"/>
    <property type="match status" value="1"/>
</dbReference>
<dbReference type="Gene3D" id="3.40.50.300">
    <property type="entry name" value="P-loop containing nucleotide triphosphate hydrolases"/>
    <property type="match status" value="1"/>
</dbReference>
<dbReference type="InterPro" id="IPR027417">
    <property type="entry name" value="P-loop_NTPase"/>
</dbReference>
<dbReference type="InterPro" id="IPR041819">
    <property type="entry name" value="Rab4"/>
</dbReference>
<dbReference type="InterPro" id="IPR050209">
    <property type="entry name" value="Rab_GTPases_membrane_traffic"/>
</dbReference>
<dbReference type="InterPro" id="IPR005225">
    <property type="entry name" value="Small_GTP-bd"/>
</dbReference>
<dbReference type="InterPro" id="IPR001806">
    <property type="entry name" value="Small_GTPase"/>
</dbReference>
<dbReference type="NCBIfam" id="TIGR00231">
    <property type="entry name" value="small_GTP"/>
    <property type="match status" value="1"/>
</dbReference>
<dbReference type="PANTHER" id="PTHR47979">
    <property type="entry name" value="DRAB11-RELATED"/>
    <property type="match status" value="1"/>
</dbReference>
<dbReference type="Pfam" id="PF00071">
    <property type="entry name" value="Ras"/>
    <property type="match status" value="1"/>
</dbReference>
<dbReference type="PRINTS" id="PR00449">
    <property type="entry name" value="RASTRNSFRMNG"/>
</dbReference>
<dbReference type="SMART" id="SM00177">
    <property type="entry name" value="ARF"/>
    <property type="match status" value="1"/>
</dbReference>
<dbReference type="SMART" id="SM00175">
    <property type="entry name" value="RAB"/>
    <property type="match status" value="1"/>
</dbReference>
<dbReference type="SMART" id="SM00176">
    <property type="entry name" value="RAN"/>
    <property type="match status" value="1"/>
</dbReference>
<dbReference type="SMART" id="SM00173">
    <property type="entry name" value="RAS"/>
    <property type="match status" value="1"/>
</dbReference>
<dbReference type="SMART" id="SM00174">
    <property type="entry name" value="RHO"/>
    <property type="match status" value="1"/>
</dbReference>
<dbReference type="SUPFAM" id="SSF52540">
    <property type="entry name" value="P-loop containing nucleoside triphosphate hydrolases"/>
    <property type="match status" value="1"/>
</dbReference>
<dbReference type="PROSITE" id="PS51419">
    <property type="entry name" value="RAB"/>
    <property type="match status" value="1"/>
</dbReference>
<organism>
    <name type="scientific">Dictyostelium discoideum</name>
    <name type="common">Social amoeba</name>
    <dbReference type="NCBI Taxonomy" id="44689"/>
    <lineage>
        <taxon>Eukaryota</taxon>
        <taxon>Amoebozoa</taxon>
        <taxon>Evosea</taxon>
        <taxon>Eumycetozoa</taxon>
        <taxon>Dictyostelia</taxon>
        <taxon>Dictyosteliales</taxon>
        <taxon>Dictyosteliaceae</taxon>
        <taxon>Dictyostelium</taxon>
    </lineage>
</organism>
<comment type="function">
    <text evidence="1">Protein transport. Probably involved in vesicular traffic (By similarity).</text>
</comment>
<comment type="subcellular location">
    <subcellularLocation>
        <location evidence="4">Cell membrane</location>
        <topology evidence="4">Lipid-anchor</topology>
        <orientation evidence="4">Cytoplasmic side</orientation>
    </subcellularLocation>
</comment>
<comment type="similarity">
    <text evidence="4">Belongs to the small GTPase superfamily. Rab family.</text>
</comment>
<proteinExistence type="inferred from homology"/>